<name>ARGB_XYLFT</name>
<evidence type="ECO:0000250" key="1"/>
<evidence type="ECO:0000255" key="2">
    <source>
        <dbReference type="PROSITE-ProRule" id="PRU00532"/>
    </source>
</evidence>
<evidence type="ECO:0000305" key="3"/>
<evidence type="ECO:0007829" key="4">
    <source>
        <dbReference type="PDB" id="4NEX"/>
    </source>
</evidence>
<evidence type="ECO:0007829" key="5">
    <source>
        <dbReference type="PDB" id="4NF1"/>
    </source>
</evidence>
<reference key="1">
    <citation type="journal article" date="2003" name="J. Bacteriol.">
        <title>Comparative analyses of the complete genome sequences of Pierce's disease and citrus variegated chlorosis strains of Xylella fastidiosa.</title>
        <authorList>
            <person name="Van Sluys M.A."/>
            <person name="de Oliveira M.C."/>
            <person name="Monteiro-Vitorello C.B."/>
            <person name="Miyaki C.Y."/>
            <person name="Furlan L.R."/>
            <person name="Camargo L.E.A."/>
            <person name="da Silva A.C.R."/>
            <person name="Moon D.H."/>
            <person name="Takita M.A."/>
            <person name="Lemos E.G.M."/>
            <person name="Machado M.A."/>
            <person name="Ferro M.I.T."/>
            <person name="da Silva F.R."/>
            <person name="Goldman M.H.S."/>
            <person name="Goldman G.H."/>
            <person name="Lemos M.V.F."/>
            <person name="El-Dorry H."/>
            <person name="Tsai S.M."/>
            <person name="Carrer H."/>
            <person name="Carraro D.M."/>
            <person name="de Oliveira R.C."/>
            <person name="Nunes L.R."/>
            <person name="Siqueira W.J."/>
            <person name="Coutinho L.L."/>
            <person name="Kimura E.T."/>
            <person name="Ferro E.S."/>
            <person name="Harakava R."/>
            <person name="Kuramae E.E."/>
            <person name="Marino C.L."/>
            <person name="Giglioti E."/>
            <person name="Abreu I.L."/>
            <person name="Alves L.M.C."/>
            <person name="do Amaral A.M."/>
            <person name="Baia G.S."/>
            <person name="Blanco S.R."/>
            <person name="Brito M.S."/>
            <person name="Cannavan F.S."/>
            <person name="Celestino A.V."/>
            <person name="da Cunha A.F."/>
            <person name="Fenille R.C."/>
            <person name="Ferro J.A."/>
            <person name="Formighieri E.F."/>
            <person name="Kishi L.T."/>
            <person name="Leoni S.G."/>
            <person name="Oliveira A.R."/>
            <person name="Rosa V.E. Jr."/>
            <person name="Sassaki F.T."/>
            <person name="Sena J.A.D."/>
            <person name="de Souza A.A."/>
            <person name="Truffi D."/>
            <person name="Tsukumo F."/>
            <person name="Yanai G.M."/>
            <person name="Zaros L.G."/>
            <person name="Civerolo E.L."/>
            <person name="Simpson A.J.G."/>
            <person name="Almeida N.F. Jr."/>
            <person name="Setubal J.C."/>
            <person name="Kitajima J.P."/>
        </authorList>
    </citation>
    <scope>NUCLEOTIDE SEQUENCE [LARGE SCALE GENOMIC DNA]</scope>
    <source>
        <strain>Temecula1 / ATCC 700964</strain>
    </source>
</reference>
<organism>
    <name type="scientific">Xylella fastidiosa (strain Temecula1 / ATCC 700964)</name>
    <dbReference type="NCBI Taxonomy" id="183190"/>
    <lineage>
        <taxon>Bacteria</taxon>
        <taxon>Pseudomonadati</taxon>
        <taxon>Pseudomonadota</taxon>
        <taxon>Gammaproteobacteria</taxon>
        <taxon>Lysobacterales</taxon>
        <taxon>Lysobacteraceae</taxon>
        <taxon>Xylella</taxon>
    </lineage>
</organism>
<keyword id="KW-0002">3D-structure</keyword>
<keyword id="KW-0028">Amino-acid biosynthesis</keyword>
<keyword id="KW-0055">Arginine biosynthesis</keyword>
<keyword id="KW-0067">ATP-binding</keyword>
<keyword id="KW-0963">Cytoplasm</keyword>
<keyword id="KW-0418">Kinase</keyword>
<keyword id="KW-0547">Nucleotide-binding</keyword>
<keyword id="KW-1185">Reference proteome</keyword>
<keyword id="KW-0808">Transferase</keyword>
<proteinExistence type="evidence at protein level"/>
<protein>
    <recommendedName>
        <fullName>Acetylglutamate kinase</fullName>
        <ecNumber>2.7.2.8</ecNumber>
    </recommendedName>
    <alternativeName>
        <fullName>N-acetyl-L-glutamate 5-phosphotransferase</fullName>
    </alternativeName>
    <alternativeName>
        <fullName>NAG kinase</fullName>
        <shortName>NAGK</shortName>
    </alternativeName>
</protein>
<comment type="catalytic activity">
    <reaction>
        <text>N-acetyl-L-glutamate + ATP = N-acetyl-L-glutamyl 5-phosphate + ADP</text>
        <dbReference type="Rhea" id="RHEA:14629"/>
        <dbReference type="ChEBI" id="CHEBI:30616"/>
        <dbReference type="ChEBI" id="CHEBI:44337"/>
        <dbReference type="ChEBI" id="CHEBI:57936"/>
        <dbReference type="ChEBI" id="CHEBI:456216"/>
        <dbReference type="EC" id="2.7.2.8"/>
    </reaction>
</comment>
<comment type="pathway">
    <text>Amino-acid biosynthesis; L-arginine biosynthesis; N(2)-acetyl-L-ornithine from L-glutamate: step 2/4.</text>
</comment>
<comment type="subcellular location">
    <subcellularLocation>
        <location evidence="1">Cytoplasm</location>
    </subcellularLocation>
</comment>
<comment type="similarity">
    <text evidence="3">In the N-terminal section; belongs to the acetylglutamate kinase family. ArgB subfamily.</text>
</comment>
<comment type="sequence caution" evidence="3">
    <conflict type="erroneous initiation">
        <sequence resource="EMBL-CDS" id="AAO28178"/>
    </conflict>
</comment>
<gene>
    <name type="primary">argB</name>
    <name type="ordered locus">PD_0293</name>
</gene>
<dbReference type="EC" id="2.7.2.8"/>
<dbReference type="EMBL" id="AE009442">
    <property type="protein sequence ID" value="AAO28178.1"/>
    <property type="status" value="ALT_INIT"/>
    <property type="molecule type" value="Genomic_DNA"/>
</dbReference>
<dbReference type="PDB" id="4NEX">
    <property type="method" value="X-ray"/>
    <property type="resolution" value="1.70 A"/>
    <property type="chains" value="A/B=276-421"/>
</dbReference>
<dbReference type="PDB" id="4NF1">
    <property type="method" value="X-ray"/>
    <property type="resolution" value="1.40 A"/>
    <property type="chains" value="A/B/C/D/E/F/G/H=276-421"/>
</dbReference>
<dbReference type="PDBsum" id="4NEX"/>
<dbReference type="PDBsum" id="4NF1"/>
<dbReference type="SMR" id="Q87EL2"/>
<dbReference type="KEGG" id="xft:PD_0293"/>
<dbReference type="HOGENOM" id="CLU_006384_4_1_6"/>
<dbReference type="BRENDA" id="2.3.1.1">
    <property type="organism ID" value="6734"/>
</dbReference>
<dbReference type="UniPathway" id="UPA00068">
    <property type="reaction ID" value="UER00107"/>
</dbReference>
<dbReference type="EvolutionaryTrace" id="Q87EL2"/>
<dbReference type="Proteomes" id="UP000002516">
    <property type="component" value="Chromosome"/>
</dbReference>
<dbReference type="GO" id="GO:0005737">
    <property type="term" value="C:cytoplasm"/>
    <property type="evidence" value="ECO:0007669"/>
    <property type="project" value="UniProtKB-SubCell"/>
</dbReference>
<dbReference type="GO" id="GO:0003991">
    <property type="term" value="F:acetylglutamate kinase activity"/>
    <property type="evidence" value="ECO:0007669"/>
    <property type="project" value="UniProtKB-EC"/>
</dbReference>
<dbReference type="GO" id="GO:0005524">
    <property type="term" value="F:ATP binding"/>
    <property type="evidence" value="ECO:0007669"/>
    <property type="project" value="UniProtKB-KW"/>
</dbReference>
<dbReference type="GO" id="GO:0004042">
    <property type="term" value="F:L-glutamate N-acetyltransferase activity"/>
    <property type="evidence" value="ECO:0007669"/>
    <property type="project" value="TreeGrafter"/>
</dbReference>
<dbReference type="GO" id="GO:0006526">
    <property type="term" value="P:L-arginine biosynthetic process"/>
    <property type="evidence" value="ECO:0007669"/>
    <property type="project" value="UniProtKB-UniPathway"/>
</dbReference>
<dbReference type="CDD" id="cd04252">
    <property type="entry name" value="AAK_NAGK-fArgBP"/>
    <property type="match status" value="1"/>
</dbReference>
<dbReference type="CDD" id="cd04265">
    <property type="entry name" value="DUF619-NAGS-U"/>
    <property type="match status" value="1"/>
</dbReference>
<dbReference type="FunFam" id="3.40.1160.10:FF:000046">
    <property type="entry name" value="N-acetylglutamate kinase / N-acetylglutamate synthase"/>
    <property type="match status" value="1"/>
</dbReference>
<dbReference type="Gene3D" id="3.40.630.30">
    <property type="match status" value="1"/>
</dbReference>
<dbReference type="Gene3D" id="3.40.1160.10">
    <property type="entry name" value="Acetylglutamate kinase-like"/>
    <property type="match status" value="1"/>
</dbReference>
<dbReference type="InterPro" id="IPR036393">
    <property type="entry name" value="AceGlu_kinase-like_sf"/>
</dbReference>
<dbReference type="InterPro" id="IPR004662">
    <property type="entry name" value="AcgluKinase_fam"/>
</dbReference>
<dbReference type="InterPro" id="IPR016181">
    <property type="entry name" value="Acyl_CoA_acyltransferase"/>
</dbReference>
<dbReference type="InterPro" id="IPR011242">
    <property type="entry name" value="ArgB_GNAT"/>
</dbReference>
<dbReference type="InterPro" id="IPR001048">
    <property type="entry name" value="Asp/Glu/Uridylate_kinase"/>
</dbReference>
<dbReference type="InterPro" id="IPR000182">
    <property type="entry name" value="GNAT_dom"/>
</dbReference>
<dbReference type="InterPro" id="IPR041734">
    <property type="entry name" value="NAGK-fArgBP"/>
</dbReference>
<dbReference type="InterPro" id="IPR006855">
    <property type="entry name" value="Vertebrate-like_GNAT_dom"/>
</dbReference>
<dbReference type="NCBIfam" id="TIGR00761">
    <property type="entry name" value="argB"/>
    <property type="match status" value="1"/>
</dbReference>
<dbReference type="NCBIfam" id="NF003386">
    <property type="entry name" value="PRK04531.1-1"/>
    <property type="match status" value="1"/>
</dbReference>
<dbReference type="NCBIfam" id="NF003387">
    <property type="entry name" value="PRK04531.1-2"/>
    <property type="match status" value="1"/>
</dbReference>
<dbReference type="PANTHER" id="PTHR23342">
    <property type="entry name" value="N-ACETYLGLUTAMATE SYNTHASE"/>
    <property type="match status" value="1"/>
</dbReference>
<dbReference type="PANTHER" id="PTHR23342:SF0">
    <property type="entry name" value="N-ACETYLGLUTAMATE SYNTHASE, MITOCHONDRIAL"/>
    <property type="match status" value="1"/>
</dbReference>
<dbReference type="Pfam" id="PF00696">
    <property type="entry name" value="AA_kinase"/>
    <property type="match status" value="1"/>
</dbReference>
<dbReference type="Pfam" id="PF04768">
    <property type="entry name" value="NAT"/>
    <property type="match status" value="1"/>
</dbReference>
<dbReference type="PIRSF" id="PIRSF036441">
    <property type="entry name" value="NAGK_DUF619"/>
    <property type="match status" value="1"/>
</dbReference>
<dbReference type="SUPFAM" id="SSF55729">
    <property type="entry name" value="Acyl-CoA N-acyltransferases (Nat)"/>
    <property type="match status" value="1"/>
</dbReference>
<dbReference type="SUPFAM" id="SSF53633">
    <property type="entry name" value="Carbamate kinase-like"/>
    <property type="match status" value="1"/>
</dbReference>
<dbReference type="PROSITE" id="PS51731">
    <property type="entry name" value="GNAT_NAGS"/>
    <property type="match status" value="1"/>
</dbReference>
<accession>Q87EL2</accession>
<feature type="chain" id="PRO_0000112688" description="Acetylglutamate kinase">
    <location>
        <begin position="1"/>
        <end position="421"/>
    </location>
</feature>
<feature type="domain" description="N-acetyltransferase" evidence="2">
    <location>
        <begin position="274"/>
        <end position="420"/>
    </location>
</feature>
<feature type="region of interest" description="Acetylglutamate kinase">
    <location>
        <begin position="1"/>
        <end position="252"/>
    </location>
</feature>
<feature type="binding site" evidence="1">
    <location>
        <begin position="59"/>
        <end position="60"/>
    </location>
    <ligand>
        <name>substrate</name>
    </ligand>
</feature>
<feature type="binding site" evidence="1">
    <location>
        <position position="81"/>
    </location>
    <ligand>
        <name>substrate</name>
    </ligand>
</feature>
<feature type="binding site" evidence="1">
    <location>
        <position position="170"/>
    </location>
    <ligand>
        <name>substrate</name>
    </ligand>
</feature>
<feature type="site" description="Transition state stabilizer" evidence="1">
    <location>
        <position position="26"/>
    </location>
</feature>
<feature type="site" description="Transition state stabilizer" evidence="1">
    <location>
        <position position="231"/>
    </location>
</feature>
<feature type="strand" evidence="4">
    <location>
        <begin position="269"/>
        <end position="272"/>
    </location>
</feature>
<feature type="strand" evidence="5">
    <location>
        <begin position="277"/>
        <end position="281"/>
    </location>
</feature>
<feature type="helix" evidence="5">
    <location>
        <begin position="282"/>
        <end position="284"/>
    </location>
</feature>
<feature type="helix" evidence="5">
    <location>
        <begin position="287"/>
        <end position="298"/>
    </location>
</feature>
<feature type="strand" evidence="5">
    <location>
        <begin position="300"/>
        <end position="302"/>
    </location>
</feature>
<feature type="helix" evidence="5">
    <location>
        <begin position="306"/>
        <end position="309"/>
    </location>
</feature>
<feature type="strand" evidence="5">
    <location>
        <begin position="312"/>
        <end position="317"/>
    </location>
</feature>
<feature type="strand" evidence="5">
    <location>
        <begin position="321"/>
        <end position="328"/>
    </location>
</feature>
<feature type="strand" evidence="5">
    <location>
        <begin position="331"/>
        <end position="333"/>
    </location>
</feature>
<feature type="strand" evidence="5">
    <location>
        <begin position="335"/>
        <end position="341"/>
    </location>
</feature>
<feature type="helix" evidence="5">
    <location>
        <begin position="343"/>
        <end position="345"/>
    </location>
</feature>
<feature type="turn" evidence="5">
    <location>
        <begin position="346"/>
        <end position="349"/>
    </location>
</feature>
<feature type="helix" evidence="5">
    <location>
        <begin position="350"/>
        <end position="361"/>
    </location>
</feature>
<feature type="strand" evidence="5">
    <location>
        <begin position="363"/>
        <end position="370"/>
    </location>
</feature>
<feature type="helix" evidence="5">
    <location>
        <begin position="376"/>
        <end position="382"/>
    </location>
</feature>
<feature type="strand" evidence="5">
    <location>
        <begin position="384"/>
        <end position="388"/>
    </location>
</feature>
<feature type="strand" evidence="5">
    <location>
        <begin position="390"/>
        <end position="398"/>
    </location>
</feature>
<feature type="helix" evidence="5">
    <location>
        <begin position="402"/>
        <end position="414"/>
    </location>
</feature>
<feature type="strand" evidence="4">
    <location>
        <begin position="418"/>
        <end position="420"/>
    </location>
</feature>
<sequence>MASAKEISQYLKRFSQLDAKRFAVVKVGGAVLRDDVDALTSSLSFLQEVGLTPIVLHGAGPQLDEELTAVGIQKKTVNGFRVTLPETMAIVRKVFHATNLQLIEALQRNGARATSITGGVFEAHYLDQETYGLVGGISAVNIAPIEASLRAASIPVIASLGETPSGQILNINADVAANELVHVLQPYKIIFLTGTGGLLDADGKIINSINLSTEYEQLIQQPWVYGGMKLKIEQIKHLLDRLPLESSVSITRPADLAKELFTHKGSGTLIRRGERVIRATTWKDLDLPRLQHLIQSSFRRTLIPHYFETTPLLRAYVSENYRAAVILTKLGNVPYLDKFAVLDDAQGEGLGRAVWSIMREETPQLFWRSRHNNQANAFYYAESDGYYKQDHWKIFWNGLHHFQQIQQCVAHCTQHPPTLID</sequence>